<name>TIF8_ORYSJ</name>
<comment type="function">
    <text evidence="1">Repressor of jasmonate responses.</text>
</comment>
<comment type="induction">
    <text evidence="4">By abscisic acid (ABA), wounding, and drought and salt stresses. Down-regulated by cold stress.</text>
</comment>
<comment type="PTM">
    <text evidence="1">Ubiquitinated. Targeted for degradation by the SCF(COI1) E3 ubiquitin ligase-proteasome pathway during jasmonate signaling.</text>
</comment>
<comment type="similarity">
    <text evidence="6">Belongs to the TIFY/JAZ family.</text>
</comment>
<protein>
    <recommendedName>
        <fullName evidence="6">Protein TIFY 8</fullName>
        <shortName evidence="5">OsTIFY8</shortName>
    </recommendedName>
</protein>
<evidence type="ECO:0000250" key="1">
    <source>
        <dbReference type="UniProtKB" id="Q7XPM8"/>
    </source>
</evidence>
<evidence type="ECO:0000255" key="2">
    <source>
        <dbReference type="PROSITE-ProRule" id="PRU00650"/>
    </source>
</evidence>
<evidence type="ECO:0000256" key="3">
    <source>
        <dbReference type="SAM" id="MobiDB-lite"/>
    </source>
</evidence>
<evidence type="ECO:0000269" key="4">
    <source>
    </source>
</evidence>
<evidence type="ECO:0000303" key="5">
    <source>
    </source>
</evidence>
<evidence type="ECO:0000305" key="6"/>
<evidence type="ECO:0000312" key="7">
    <source>
        <dbReference type="EMBL" id="BAD16139.1"/>
    </source>
</evidence>
<evidence type="ECO:0000312" key="8">
    <source>
        <dbReference type="EMBL" id="BAF09940.1"/>
    </source>
</evidence>
<proteinExistence type="evidence at transcript level"/>
<reference key="1">
    <citation type="journal article" date="2005" name="Nature">
        <title>The map-based sequence of the rice genome.</title>
        <authorList>
            <consortium name="International rice genome sequencing project (IRGSP)"/>
        </authorList>
    </citation>
    <scope>NUCLEOTIDE SEQUENCE [LARGE SCALE GENOMIC DNA]</scope>
    <source>
        <strain>cv. Nipponbare</strain>
    </source>
</reference>
<reference key="2">
    <citation type="journal article" date="2008" name="Nucleic Acids Res.">
        <title>The rice annotation project database (RAP-DB): 2008 update.</title>
        <authorList>
            <consortium name="The rice annotation project (RAP)"/>
        </authorList>
    </citation>
    <scope>GENOME REANNOTATION</scope>
    <source>
        <strain>cv. Nipponbare</strain>
    </source>
</reference>
<reference key="3">
    <citation type="journal article" date="2013" name="Rice">
        <title>Improvement of the Oryza sativa Nipponbare reference genome using next generation sequence and optical map data.</title>
        <authorList>
            <person name="Kawahara Y."/>
            <person name="de la Bastide M."/>
            <person name="Hamilton J.P."/>
            <person name="Kanamori H."/>
            <person name="McCombie W.R."/>
            <person name="Ouyang S."/>
            <person name="Schwartz D.C."/>
            <person name="Tanaka T."/>
            <person name="Wu J."/>
            <person name="Zhou S."/>
            <person name="Childs K.L."/>
            <person name="Davidson R.M."/>
            <person name="Lin H."/>
            <person name="Quesada-Ocampo L."/>
            <person name="Vaillancourt B."/>
            <person name="Sakai H."/>
            <person name="Lee S.S."/>
            <person name="Kim J."/>
            <person name="Numa H."/>
            <person name="Itoh T."/>
            <person name="Buell C.R."/>
            <person name="Matsumoto T."/>
        </authorList>
    </citation>
    <scope>GENOME REANNOTATION</scope>
    <source>
        <strain>cv. Nipponbare</strain>
    </source>
</reference>
<reference key="4">
    <citation type="journal article" date="2003" name="Science">
        <title>Collection, mapping, and annotation of over 28,000 cDNA clones from japonica rice.</title>
        <authorList>
            <consortium name="The rice full-length cDNA consortium"/>
        </authorList>
    </citation>
    <scope>NUCLEOTIDE SEQUENCE [LARGE SCALE MRNA]</scope>
    <source>
        <strain>cv. Nipponbare</strain>
    </source>
</reference>
<reference key="5">
    <citation type="journal article" date="2009" name="Plant Mol. Biol.">
        <title>Identification and expression profiling analysis of TIFY family genes involved in stress and phytohormone responses in rice.</title>
        <authorList>
            <person name="Ye H."/>
            <person name="Du H."/>
            <person name="Tang N."/>
            <person name="Li X."/>
            <person name="Xiong L."/>
        </authorList>
    </citation>
    <scope>GENE FAMILY</scope>
    <scope>NOMENCLATURE</scope>
    <scope>INDUCTION</scope>
</reference>
<feature type="chain" id="PRO_0000434845" description="Protein TIFY 8">
    <location>
        <begin position="1"/>
        <end position="157"/>
    </location>
</feature>
<feature type="domain" description="Tify" evidence="2">
    <location>
        <begin position="33"/>
        <end position="68"/>
    </location>
</feature>
<feature type="region of interest" description="Disordered" evidence="3">
    <location>
        <begin position="126"/>
        <end position="147"/>
    </location>
</feature>
<feature type="compositionally biased region" description="Basic residues" evidence="3">
    <location>
        <begin position="137"/>
        <end position="147"/>
    </location>
</feature>
<sequence>MPPPAAVASLTLQVPGGAHDVTSLATSPRTMAVPGTTEQLTIFYSGSMVKFDNVPREKIRYACRLRRLYSSLQRSLQTQDTSMFPSSSSLHIQTKRRGYSVIRLLREMLMVCSSTRTKPMLVHSDSIGAQRTGTPPSRRRIHARGKSRSCQEMSHCW</sequence>
<accession>Q6Z2K1</accession>
<accession>A0A0P0VP69</accession>
<keyword id="KW-1184">Jasmonic acid signaling pathway</keyword>
<keyword id="KW-1185">Reference proteome</keyword>
<keyword id="KW-0804">Transcription</keyword>
<keyword id="KW-0805">Transcription regulation</keyword>
<keyword id="KW-0832">Ubl conjugation</keyword>
<gene>
    <name evidence="5" type="primary">TIFY8</name>
    <name evidence="8" type="ordered locus">Os02g0732400</name>
    <name evidence="6" type="ordered locus">LOC_Os02g49970</name>
    <name evidence="7" type="ORF">P0643A10.21</name>
</gene>
<dbReference type="EMBL" id="AP005319">
    <property type="protein sequence ID" value="BAD16139.1"/>
    <property type="molecule type" value="Genomic_DNA"/>
</dbReference>
<dbReference type="EMBL" id="AP008208">
    <property type="protein sequence ID" value="BAF09940.1"/>
    <property type="molecule type" value="Genomic_DNA"/>
</dbReference>
<dbReference type="EMBL" id="AP014958">
    <property type="protein sequence ID" value="BAS80766.1"/>
    <property type="molecule type" value="Genomic_DNA"/>
</dbReference>
<dbReference type="EMBL" id="AK107003">
    <property type="protein sequence ID" value="BAG97910.1"/>
    <property type="molecule type" value="mRNA"/>
</dbReference>
<dbReference type="SMR" id="Q6Z2K1"/>
<dbReference type="STRING" id="39947.Q6Z2K1"/>
<dbReference type="PaxDb" id="39947-Q6Z2K1"/>
<dbReference type="EnsemblPlants" id="Os02t0732400-01">
    <property type="protein sequence ID" value="Os02t0732400-01"/>
    <property type="gene ID" value="Os02g0732400"/>
</dbReference>
<dbReference type="Gramene" id="Os02t0732400-01">
    <property type="protein sequence ID" value="Os02t0732400-01"/>
    <property type="gene ID" value="Os02g0732400"/>
</dbReference>
<dbReference type="KEGG" id="dosa:Os02g0732400"/>
<dbReference type="HOGENOM" id="CLU_1680830_0_0_1"/>
<dbReference type="InParanoid" id="Q6Z2K1"/>
<dbReference type="OMA" id="QDTSMFP"/>
<dbReference type="Proteomes" id="UP000000763">
    <property type="component" value="Chromosome 2"/>
</dbReference>
<dbReference type="Proteomes" id="UP000059680">
    <property type="component" value="Chromosome 2"/>
</dbReference>
<dbReference type="GO" id="GO:0005634">
    <property type="term" value="C:nucleus"/>
    <property type="evidence" value="ECO:0000318"/>
    <property type="project" value="GO_Central"/>
</dbReference>
<dbReference type="GO" id="GO:0031347">
    <property type="term" value="P:regulation of defense response"/>
    <property type="evidence" value="ECO:0000318"/>
    <property type="project" value="GO_Central"/>
</dbReference>
<dbReference type="GO" id="GO:2000022">
    <property type="term" value="P:regulation of jasmonic acid mediated signaling pathway"/>
    <property type="evidence" value="ECO:0000318"/>
    <property type="project" value="GO_Central"/>
</dbReference>
<dbReference type="GO" id="GO:0009611">
    <property type="term" value="P:response to wounding"/>
    <property type="evidence" value="ECO:0000318"/>
    <property type="project" value="GO_Central"/>
</dbReference>
<dbReference type="InterPro" id="IPR010399">
    <property type="entry name" value="Tify_dom"/>
</dbReference>
<dbReference type="Pfam" id="PF06200">
    <property type="entry name" value="tify"/>
    <property type="match status" value="1"/>
</dbReference>
<dbReference type="PROSITE" id="PS51320">
    <property type="entry name" value="TIFY"/>
    <property type="match status" value="1"/>
</dbReference>
<organism>
    <name type="scientific">Oryza sativa subsp. japonica</name>
    <name type="common">Rice</name>
    <dbReference type="NCBI Taxonomy" id="39947"/>
    <lineage>
        <taxon>Eukaryota</taxon>
        <taxon>Viridiplantae</taxon>
        <taxon>Streptophyta</taxon>
        <taxon>Embryophyta</taxon>
        <taxon>Tracheophyta</taxon>
        <taxon>Spermatophyta</taxon>
        <taxon>Magnoliopsida</taxon>
        <taxon>Liliopsida</taxon>
        <taxon>Poales</taxon>
        <taxon>Poaceae</taxon>
        <taxon>BOP clade</taxon>
        <taxon>Oryzoideae</taxon>
        <taxon>Oryzeae</taxon>
        <taxon>Oryzinae</taxon>
        <taxon>Oryza</taxon>
        <taxon>Oryza sativa</taxon>
    </lineage>
</organism>